<dbReference type="EMBL" id="CP000152">
    <property type="protein sequence ID" value="ABB10198.1"/>
    <property type="molecule type" value="Genomic_DNA"/>
</dbReference>
<dbReference type="RefSeq" id="WP_011353696.1">
    <property type="nucleotide sequence ID" value="NC_007511.1"/>
</dbReference>
<dbReference type="SMR" id="Q39BG3"/>
<dbReference type="GeneID" id="45096470"/>
<dbReference type="KEGG" id="bur:Bcep18194_B0081"/>
<dbReference type="PATRIC" id="fig|482957.22.peg.3642"/>
<dbReference type="HOGENOM" id="CLU_057831_0_0_4"/>
<dbReference type="Proteomes" id="UP000002705">
    <property type="component" value="Chromosome 2"/>
</dbReference>
<dbReference type="Gene3D" id="1.10.10.10">
    <property type="entry name" value="Winged helix-like DNA-binding domain superfamily/Winged helix DNA-binding domain"/>
    <property type="match status" value="2"/>
</dbReference>
<dbReference type="HAMAP" id="MF_01584">
    <property type="entry name" value="UPF0502"/>
    <property type="match status" value="1"/>
</dbReference>
<dbReference type="InterPro" id="IPR007432">
    <property type="entry name" value="DUF480"/>
</dbReference>
<dbReference type="InterPro" id="IPR036388">
    <property type="entry name" value="WH-like_DNA-bd_sf"/>
</dbReference>
<dbReference type="InterPro" id="IPR036390">
    <property type="entry name" value="WH_DNA-bd_sf"/>
</dbReference>
<dbReference type="PANTHER" id="PTHR38768">
    <property type="entry name" value="UPF0502 PROTEIN YCEH"/>
    <property type="match status" value="1"/>
</dbReference>
<dbReference type="PANTHER" id="PTHR38768:SF1">
    <property type="entry name" value="UPF0502 PROTEIN YCEH"/>
    <property type="match status" value="1"/>
</dbReference>
<dbReference type="Pfam" id="PF04337">
    <property type="entry name" value="DUF480"/>
    <property type="match status" value="1"/>
</dbReference>
<dbReference type="SUPFAM" id="SSF46785">
    <property type="entry name" value="Winged helix' DNA-binding domain"/>
    <property type="match status" value="2"/>
</dbReference>
<proteinExistence type="inferred from homology"/>
<evidence type="ECO:0000255" key="1">
    <source>
        <dbReference type="HAMAP-Rule" id="MF_01584"/>
    </source>
</evidence>
<sequence length="235" mass="25214">MNTTPDTPTPRALRELTPLEARIVGVLVEKQHTVPDTYPLSLNALTAGCNQKTARAPVMSVSEDEVTTALDGLKHLSLVMEGSSSRVPRFEHNVNRVLGIPSQAIALLTILLLRGPQTAAELRLNSARLHGFADISSVEAFLDELAARAQPLVVRLPRAPGARENRWMHLMCGEVNLADFASADAGGADSVPPSEFEALKAEQKRLADEVARLNALVLRMASELGIDVDAQGDAS</sequence>
<name>Y081_BURL3</name>
<accession>Q39BG3</accession>
<gene>
    <name type="ordered locus">Bcep18194_B0081</name>
</gene>
<feature type="chain" id="PRO_0000309378" description="UPF0502 protein Bcep18194_B0081">
    <location>
        <begin position="1"/>
        <end position="235"/>
    </location>
</feature>
<organism>
    <name type="scientific">Burkholderia lata (strain ATCC 17760 / DSM 23089 / LMG 22485 / NCIMB 9086 / R18194 / 383)</name>
    <dbReference type="NCBI Taxonomy" id="482957"/>
    <lineage>
        <taxon>Bacteria</taxon>
        <taxon>Pseudomonadati</taxon>
        <taxon>Pseudomonadota</taxon>
        <taxon>Betaproteobacteria</taxon>
        <taxon>Burkholderiales</taxon>
        <taxon>Burkholderiaceae</taxon>
        <taxon>Burkholderia</taxon>
        <taxon>Burkholderia cepacia complex</taxon>
    </lineage>
</organism>
<protein>
    <recommendedName>
        <fullName evidence="1">UPF0502 protein Bcep18194_B0081</fullName>
    </recommendedName>
</protein>
<comment type="similarity">
    <text evidence="1">Belongs to the UPF0502 family.</text>
</comment>
<reference key="1">
    <citation type="submission" date="2005-10" db="EMBL/GenBank/DDBJ databases">
        <title>Complete sequence of chromosome 2 of Burkholderia sp. 383.</title>
        <authorList>
            <consortium name="US DOE Joint Genome Institute"/>
            <person name="Copeland A."/>
            <person name="Lucas S."/>
            <person name="Lapidus A."/>
            <person name="Barry K."/>
            <person name="Detter J.C."/>
            <person name="Glavina T."/>
            <person name="Hammon N."/>
            <person name="Israni S."/>
            <person name="Pitluck S."/>
            <person name="Chain P."/>
            <person name="Malfatti S."/>
            <person name="Shin M."/>
            <person name="Vergez L."/>
            <person name="Schmutz J."/>
            <person name="Larimer F."/>
            <person name="Land M."/>
            <person name="Kyrpides N."/>
            <person name="Lykidis A."/>
            <person name="Richardson P."/>
        </authorList>
    </citation>
    <scope>NUCLEOTIDE SEQUENCE [LARGE SCALE GENOMIC DNA]</scope>
    <source>
        <strain>ATCC 17760 / DSM 23089 / LMG 22485 / NCIMB 9086 / R18194 / 383</strain>
    </source>
</reference>